<dbReference type="EC" id="2.4.2.9" evidence="1"/>
<dbReference type="EMBL" id="CP000440">
    <property type="protein sequence ID" value="ABI87887.1"/>
    <property type="molecule type" value="Genomic_DNA"/>
</dbReference>
<dbReference type="RefSeq" id="WP_011657517.1">
    <property type="nucleotide sequence ID" value="NZ_CP009798.1"/>
</dbReference>
<dbReference type="SMR" id="Q0BD86"/>
<dbReference type="GeneID" id="93085461"/>
<dbReference type="KEGG" id="bam:Bamb_2331"/>
<dbReference type="PATRIC" id="fig|339670.21.peg.2595"/>
<dbReference type="eggNOG" id="COG0035">
    <property type="taxonomic scope" value="Bacteria"/>
</dbReference>
<dbReference type="UniPathway" id="UPA00574">
    <property type="reaction ID" value="UER00636"/>
</dbReference>
<dbReference type="Proteomes" id="UP000000662">
    <property type="component" value="Chromosome 1"/>
</dbReference>
<dbReference type="GO" id="GO:0005525">
    <property type="term" value="F:GTP binding"/>
    <property type="evidence" value="ECO:0007669"/>
    <property type="project" value="UniProtKB-KW"/>
</dbReference>
<dbReference type="GO" id="GO:0000287">
    <property type="term" value="F:magnesium ion binding"/>
    <property type="evidence" value="ECO:0007669"/>
    <property type="project" value="UniProtKB-UniRule"/>
</dbReference>
<dbReference type="GO" id="GO:0004845">
    <property type="term" value="F:uracil phosphoribosyltransferase activity"/>
    <property type="evidence" value="ECO:0007669"/>
    <property type="project" value="UniProtKB-UniRule"/>
</dbReference>
<dbReference type="GO" id="GO:0044206">
    <property type="term" value="P:UMP salvage"/>
    <property type="evidence" value="ECO:0007669"/>
    <property type="project" value="UniProtKB-UniRule"/>
</dbReference>
<dbReference type="GO" id="GO:0006223">
    <property type="term" value="P:uracil salvage"/>
    <property type="evidence" value="ECO:0007669"/>
    <property type="project" value="InterPro"/>
</dbReference>
<dbReference type="CDD" id="cd06223">
    <property type="entry name" value="PRTases_typeI"/>
    <property type="match status" value="1"/>
</dbReference>
<dbReference type="FunFam" id="3.40.50.2020:FF:000003">
    <property type="entry name" value="Uracil phosphoribosyltransferase"/>
    <property type="match status" value="1"/>
</dbReference>
<dbReference type="Gene3D" id="3.40.50.2020">
    <property type="match status" value="1"/>
</dbReference>
<dbReference type="HAMAP" id="MF_01218_B">
    <property type="entry name" value="Upp_B"/>
    <property type="match status" value="1"/>
</dbReference>
<dbReference type="InterPro" id="IPR000836">
    <property type="entry name" value="PRibTrfase_dom"/>
</dbReference>
<dbReference type="InterPro" id="IPR029057">
    <property type="entry name" value="PRTase-like"/>
</dbReference>
<dbReference type="InterPro" id="IPR034332">
    <property type="entry name" value="Upp_B"/>
</dbReference>
<dbReference type="InterPro" id="IPR050054">
    <property type="entry name" value="UPRTase/APRTase"/>
</dbReference>
<dbReference type="InterPro" id="IPR005765">
    <property type="entry name" value="Ura_phspho_trans"/>
</dbReference>
<dbReference type="NCBIfam" id="NF001097">
    <property type="entry name" value="PRK00129.1"/>
    <property type="match status" value="1"/>
</dbReference>
<dbReference type="NCBIfam" id="TIGR01091">
    <property type="entry name" value="upp"/>
    <property type="match status" value="1"/>
</dbReference>
<dbReference type="PANTHER" id="PTHR32315">
    <property type="entry name" value="ADENINE PHOSPHORIBOSYLTRANSFERASE"/>
    <property type="match status" value="1"/>
</dbReference>
<dbReference type="PANTHER" id="PTHR32315:SF4">
    <property type="entry name" value="URACIL PHOSPHORIBOSYLTRANSFERASE, CHLOROPLASTIC"/>
    <property type="match status" value="1"/>
</dbReference>
<dbReference type="Pfam" id="PF14681">
    <property type="entry name" value="UPRTase"/>
    <property type="match status" value="1"/>
</dbReference>
<dbReference type="SUPFAM" id="SSF53271">
    <property type="entry name" value="PRTase-like"/>
    <property type="match status" value="1"/>
</dbReference>
<keyword id="KW-0021">Allosteric enzyme</keyword>
<keyword id="KW-0328">Glycosyltransferase</keyword>
<keyword id="KW-0342">GTP-binding</keyword>
<keyword id="KW-0460">Magnesium</keyword>
<keyword id="KW-0547">Nucleotide-binding</keyword>
<keyword id="KW-0808">Transferase</keyword>
<reference key="1">
    <citation type="submission" date="2006-08" db="EMBL/GenBank/DDBJ databases">
        <title>Complete sequence of chromosome 1 of Burkholderia cepacia AMMD.</title>
        <authorList>
            <person name="Copeland A."/>
            <person name="Lucas S."/>
            <person name="Lapidus A."/>
            <person name="Barry K."/>
            <person name="Detter J.C."/>
            <person name="Glavina del Rio T."/>
            <person name="Hammon N."/>
            <person name="Israni S."/>
            <person name="Pitluck S."/>
            <person name="Bruce D."/>
            <person name="Chain P."/>
            <person name="Malfatti S."/>
            <person name="Shin M."/>
            <person name="Vergez L."/>
            <person name="Schmutz J."/>
            <person name="Larimer F."/>
            <person name="Land M."/>
            <person name="Hauser L."/>
            <person name="Kyrpides N."/>
            <person name="Kim E."/>
            <person name="Parke J."/>
            <person name="Coenye T."/>
            <person name="Konstantinidis K."/>
            <person name="Ramette A."/>
            <person name="Tiedje J."/>
            <person name="Richardson P."/>
        </authorList>
    </citation>
    <scope>NUCLEOTIDE SEQUENCE [LARGE SCALE GENOMIC DNA]</scope>
    <source>
        <strain>ATCC BAA-244 / DSM 16087 / CCUG 44356 / LMG 19182 / AMMD</strain>
    </source>
</reference>
<feature type="chain" id="PRO_1000053683" description="Uracil phosphoribosyltransferase">
    <location>
        <begin position="1"/>
        <end position="216"/>
    </location>
</feature>
<feature type="binding site" evidence="1">
    <location>
        <position position="85"/>
    </location>
    <ligand>
        <name>5-phospho-alpha-D-ribose 1-diphosphate</name>
        <dbReference type="ChEBI" id="CHEBI:58017"/>
    </ligand>
</feature>
<feature type="binding site" evidence="1">
    <location>
        <position position="110"/>
    </location>
    <ligand>
        <name>5-phospho-alpha-D-ribose 1-diphosphate</name>
        <dbReference type="ChEBI" id="CHEBI:58017"/>
    </ligand>
</feature>
<feature type="binding site" evidence="1">
    <location>
        <begin position="135"/>
        <end position="143"/>
    </location>
    <ligand>
        <name>5-phospho-alpha-D-ribose 1-diphosphate</name>
        <dbReference type="ChEBI" id="CHEBI:58017"/>
    </ligand>
</feature>
<feature type="binding site" evidence="1">
    <location>
        <position position="200"/>
    </location>
    <ligand>
        <name>uracil</name>
        <dbReference type="ChEBI" id="CHEBI:17568"/>
    </ligand>
</feature>
<feature type="binding site" evidence="1">
    <location>
        <begin position="205"/>
        <end position="207"/>
    </location>
    <ligand>
        <name>uracil</name>
        <dbReference type="ChEBI" id="CHEBI:17568"/>
    </ligand>
</feature>
<feature type="binding site" evidence="1">
    <location>
        <position position="206"/>
    </location>
    <ligand>
        <name>5-phospho-alpha-D-ribose 1-diphosphate</name>
        <dbReference type="ChEBI" id="CHEBI:58017"/>
    </ligand>
</feature>
<evidence type="ECO:0000255" key="1">
    <source>
        <dbReference type="HAMAP-Rule" id="MF_01218"/>
    </source>
</evidence>
<name>UPP_BURCM</name>
<comment type="function">
    <text evidence="1">Catalyzes the conversion of uracil and 5-phospho-alpha-D-ribose 1-diphosphate (PRPP) to UMP and diphosphate.</text>
</comment>
<comment type="catalytic activity">
    <reaction evidence="1">
        <text>UMP + diphosphate = 5-phospho-alpha-D-ribose 1-diphosphate + uracil</text>
        <dbReference type="Rhea" id="RHEA:13017"/>
        <dbReference type="ChEBI" id="CHEBI:17568"/>
        <dbReference type="ChEBI" id="CHEBI:33019"/>
        <dbReference type="ChEBI" id="CHEBI:57865"/>
        <dbReference type="ChEBI" id="CHEBI:58017"/>
        <dbReference type="EC" id="2.4.2.9"/>
    </reaction>
</comment>
<comment type="cofactor">
    <cofactor evidence="1">
        <name>Mg(2+)</name>
        <dbReference type="ChEBI" id="CHEBI:18420"/>
    </cofactor>
    <text evidence="1">Binds 1 Mg(2+) ion per subunit. The magnesium is bound as Mg-PRPP.</text>
</comment>
<comment type="activity regulation">
    <text evidence="1">Allosterically activated by GTP.</text>
</comment>
<comment type="pathway">
    <text evidence="1">Pyrimidine metabolism; UMP biosynthesis via salvage pathway; UMP from uracil: step 1/1.</text>
</comment>
<comment type="similarity">
    <text evidence="1">Belongs to the UPRTase family.</text>
</comment>
<proteinExistence type="inferred from homology"/>
<accession>Q0BD86</accession>
<organism>
    <name type="scientific">Burkholderia ambifaria (strain ATCC BAA-244 / DSM 16087 / CCUG 44356 / LMG 19182 / AMMD)</name>
    <name type="common">Burkholderia cepacia (strain AMMD)</name>
    <dbReference type="NCBI Taxonomy" id="339670"/>
    <lineage>
        <taxon>Bacteria</taxon>
        <taxon>Pseudomonadati</taxon>
        <taxon>Pseudomonadota</taxon>
        <taxon>Betaproteobacteria</taxon>
        <taxon>Burkholderiales</taxon>
        <taxon>Burkholderiaceae</taxon>
        <taxon>Burkholderia</taxon>
        <taxon>Burkholderia cepacia complex</taxon>
    </lineage>
</organism>
<protein>
    <recommendedName>
        <fullName evidence="1">Uracil phosphoribosyltransferase</fullName>
        <ecNumber evidence="1">2.4.2.9</ecNumber>
    </recommendedName>
    <alternativeName>
        <fullName evidence="1">UMP pyrophosphorylase</fullName>
    </alternativeName>
    <alternativeName>
        <fullName evidence="1">UPRTase</fullName>
    </alternativeName>
</protein>
<gene>
    <name evidence="1" type="primary">upp</name>
    <name type="ordered locus">Bamb_2331</name>
</gene>
<sequence>MKQDSRFPNLFITDHPLIQHKLTHMRDKDTSTRTFRELLREITLLMGYEITRNLPITTKRVETPLVAVDAPVIAGKKLAIVPVLRAGIGMSDGLLDLVPSARVGHIGVYRAEDHRPVEYLVRLPDLEDRIFILCDPMVATGYSAVHAVDVLKRRNVPAANITFVALVAAPEGVQVFQDAHPDVKLFVASLDSHLNEHAYIVPGLGDAGDRLFGTKN</sequence>